<dbReference type="EC" id="5.4.3.8" evidence="1"/>
<dbReference type="EMBL" id="U10278">
    <property type="protein sequence ID" value="AAA79123.1"/>
    <property type="molecule type" value="Genomic_DNA"/>
</dbReference>
<dbReference type="EMBL" id="AL133315">
    <property type="protein sequence ID" value="CAB62362.1"/>
    <property type="molecule type" value="Genomic_DNA"/>
</dbReference>
<dbReference type="EMBL" id="CP002686">
    <property type="protein sequence ID" value="AEE78450.1"/>
    <property type="molecule type" value="Genomic_DNA"/>
</dbReference>
<dbReference type="EMBL" id="BT025324">
    <property type="protein sequence ID" value="ABF57280.1"/>
    <property type="molecule type" value="mRNA"/>
</dbReference>
<dbReference type="EMBL" id="AK229328">
    <property type="protein sequence ID" value="BAF01191.1"/>
    <property type="molecule type" value="mRNA"/>
</dbReference>
<dbReference type="PIR" id="T46217">
    <property type="entry name" value="T46217"/>
</dbReference>
<dbReference type="RefSeq" id="NP_190442.1">
    <property type="nucleotide sequence ID" value="NM_114732.5"/>
</dbReference>
<dbReference type="SMR" id="Q42522"/>
<dbReference type="BioGRID" id="9352">
    <property type="interactions" value="17"/>
</dbReference>
<dbReference type="FunCoup" id="Q42522">
    <property type="interactions" value="1043"/>
</dbReference>
<dbReference type="IntAct" id="Q42522">
    <property type="interactions" value="1"/>
</dbReference>
<dbReference type="STRING" id="3702.Q42522"/>
<dbReference type="iPTMnet" id="Q42522"/>
<dbReference type="MetOSite" id="Q42522"/>
<dbReference type="PaxDb" id="3702-AT3G48730.1"/>
<dbReference type="ProteomicsDB" id="222313"/>
<dbReference type="EnsemblPlants" id="AT3G48730.1">
    <property type="protein sequence ID" value="AT3G48730.1"/>
    <property type="gene ID" value="AT3G48730"/>
</dbReference>
<dbReference type="GeneID" id="824034"/>
<dbReference type="Gramene" id="AT3G48730.1">
    <property type="protein sequence ID" value="AT3G48730.1"/>
    <property type="gene ID" value="AT3G48730"/>
</dbReference>
<dbReference type="KEGG" id="ath:AT3G48730"/>
<dbReference type="Araport" id="AT3G48730"/>
<dbReference type="TAIR" id="AT3G48730">
    <property type="gene designation" value="GSA2"/>
</dbReference>
<dbReference type="eggNOG" id="KOG1401">
    <property type="taxonomic scope" value="Eukaryota"/>
</dbReference>
<dbReference type="HOGENOM" id="CLU_016922_1_5_1"/>
<dbReference type="InParanoid" id="Q42522"/>
<dbReference type="OMA" id="RRCIKMS"/>
<dbReference type="PhylomeDB" id="Q42522"/>
<dbReference type="BioCyc" id="ARA:AT3G48730-MONOMER"/>
<dbReference type="UniPathway" id="UPA00251">
    <property type="reaction ID" value="UER00317"/>
</dbReference>
<dbReference type="UniPathway" id="UPA00668"/>
<dbReference type="CD-CODE" id="4299E36E">
    <property type="entry name" value="Nucleolus"/>
</dbReference>
<dbReference type="PRO" id="PR:Q42522"/>
<dbReference type="Proteomes" id="UP000006548">
    <property type="component" value="Chromosome 3"/>
</dbReference>
<dbReference type="ExpressionAtlas" id="Q42522">
    <property type="expression patterns" value="baseline and differential"/>
</dbReference>
<dbReference type="GO" id="GO:0009507">
    <property type="term" value="C:chloroplast"/>
    <property type="evidence" value="ECO:0000314"/>
    <property type="project" value="UniProtKB"/>
</dbReference>
<dbReference type="GO" id="GO:0009941">
    <property type="term" value="C:chloroplast envelope"/>
    <property type="evidence" value="ECO:0007005"/>
    <property type="project" value="TAIR"/>
</dbReference>
<dbReference type="GO" id="GO:0009570">
    <property type="term" value="C:chloroplast stroma"/>
    <property type="evidence" value="ECO:0007005"/>
    <property type="project" value="TAIR"/>
</dbReference>
<dbReference type="GO" id="GO:0005829">
    <property type="term" value="C:cytosol"/>
    <property type="evidence" value="ECO:0007005"/>
    <property type="project" value="TAIR"/>
</dbReference>
<dbReference type="GO" id="GO:0042286">
    <property type="term" value="F:glutamate-1-semialdehyde 2,1-aminomutase activity"/>
    <property type="evidence" value="ECO:0007669"/>
    <property type="project" value="UniProtKB-EC"/>
</dbReference>
<dbReference type="GO" id="GO:0042803">
    <property type="term" value="F:protein homodimerization activity"/>
    <property type="evidence" value="ECO:0000250"/>
    <property type="project" value="UniProtKB"/>
</dbReference>
<dbReference type="GO" id="GO:0030170">
    <property type="term" value="F:pyridoxal phosphate binding"/>
    <property type="evidence" value="ECO:0000250"/>
    <property type="project" value="UniProtKB"/>
</dbReference>
<dbReference type="GO" id="GO:0008483">
    <property type="term" value="F:transaminase activity"/>
    <property type="evidence" value="ECO:0007669"/>
    <property type="project" value="InterPro"/>
</dbReference>
<dbReference type="GO" id="GO:0015995">
    <property type="term" value="P:chlorophyll biosynthetic process"/>
    <property type="evidence" value="ECO:0007669"/>
    <property type="project" value="UniProtKB-UniPathway"/>
</dbReference>
<dbReference type="GO" id="GO:0006782">
    <property type="term" value="P:protoporphyrinogen IX biosynthetic process"/>
    <property type="evidence" value="ECO:0007669"/>
    <property type="project" value="UniProtKB-UniPathway"/>
</dbReference>
<dbReference type="CDD" id="cd00610">
    <property type="entry name" value="OAT_like"/>
    <property type="match status" value="1"/>
</dbReference>
<dbReference type="FunFam" id="3.40.640.10:FF:000021">
    <property type="entry name" value="Glutamate-1-semialdehyde 2,1-aminomutase"/>
    <property type="match status" value="1"/>
</dbReference>
<dbReference type="FunFam" id="3.90.1150.10:FF:000012">
    <property type="entry name" value="Glutamate-1-semialdehyde 2,1-aminomutase"/>
    <property type="match status" value="1"/>
</dbReference>
<dbReference type="Gene3D" id="3.90.1150.10">
    <property type="entry name" value="Aspartate Aminotransferase, domain 1"/>
    <property type="match status" value="1"/>
</dbReference>
<dbReference type="Gene3D" id="3.40.640.10">
    <property type="entry name" value="Type I PLP-dependent aspartate aminotransferase-like (Major domain)"/>
    <property type="match status" value="1"/>
</dbReference>
<dbReference type="HAMAP" id="MF_00375">
    <property type="entry name" value="HemL_aminotrans_3"/>
    <property type="match status" value="1"/>
</dbReference>
<dbReference type="InterPro" id="IPR004639">
    <property type="entry name" value="4pyrrol_synth_GluAld_NH2Trfase"/>
</dbReference>
<dbReference type="InterPro" id="IPR005814">
    <property type="entry name" value="Aminotrans_3"/>
</dbReference>
<dbReference type="InterPro" id="IPR049704">
    <property type="entry name" value="Aminotrans_3_PPA_site"/>
</dbReference>
<dbReference type="InterPro" id="IPR015424">
    <property type="entry name" value="PyrdxlP-dep_Trfase"/>
</dbReference>
<dbReference type="InterPro" id="IPR015421">
    <property type="entry name" value="PyrdxlP-dep_Trfase_major"/>
</dbReference>
<dbReference type="InterPro" id="IPR015422">
    <property type="entry name" value="PyrdxlP-dep_Trfase_small"/>
</dbReference>
<dbReference type="NCBIfam" id="TIGR00713">
    <property type="entry name" value="hemL"/>
    <property type="match status" value="1"/>
</dbReference>
<dbReference type="NCBIfam" id="NF000818">
    <property type="entry name" value="PRK00062.1"/>
    <property type="match status" value="1"/>
</dbReference>
<dbReference type="PANTHER" id="PTHR43713">
    <property type="entry name" value="GLUTAMATE-1-SEMIALDEHYDE 2,1-AMINOMUTASE"/>
    <property type="match status" value="1"/>
</dbReference>
<dbReference type="PANTHER" id="PTHR43713:SF3">
    <property type="entry name" value="GLUTAMATE-1-SEMIALDEHYDE 2,1-AMINOMUTASE 1, CHLOROPLASTIC-RELATED"/>
    <property type="match status" value="1"/>
</dbReference>
<dbReference type="Pfam" id="PF00202">
    <property type="entry name" value="Aminotran_3"/>
    <property type="match status" value="1"/>
</dbReference>
<dbReference type="SUPFAM" id="SSF53383">
    <property type="entry name" value="PLP-dependent transferases"/>
    <property type="match status" value="1"/>
</dbReference>
<dbReference type="PROSITE" id="PS00600">
    <property type="entry name" value="AA_TRANSFER_CLASS_3"/>
    <property type="match status" value="1"/>
</dbReference>
<proteinExistence type="evidence at protein level"/>
<comment type="function">
    <text evidence="1">Transaminase converting glutamate 1-semialdehyde (GSA) to 5-aminolevulinate (ALA). Involved in the biosynthesis of tetrapyrroles.</text>
</comment>
<comment type="catalytic activity">
    <reaction evidence="1">
        <text>(S)-4-amino-5-oxopentanoate = 5-aminolevulinate</text>
        <dbReference type="Rhea" id="RHEA:14265"/>
        <dbReference type="ChEBI" id="CHEBI:57501"/>
        <dbReference type="ChEBI" id="CHEBI:356416"/>
        <dbReference type="EC" id="5.4.3.8"/>
    </reaction>
</comment>
<comment type="cofactor">
    <cofactor evidence="1">
        <name>pyridoxal 5'-phosphate</name>
        <dbReference type="ChEBI" id="CHEBI:597326"/>
    </cofactor>
    <text evidence="1">Can use both pyridoxamine 5'-phosphate (PMP) and pyridoxal 5'-phosphate (PLP) as cofactors.</text>
</comment>
<comment type="pathway">
    <text evidence="1">Porphyrin-containing compound metabolism; protoporphyrin-IX biosynthesis; 5-aminolevulinate from L-glutamyl-tRNA(Glu): step 2/2.</text>
</comment>
<comment type="pathway">
    <text evidence="1">Porphyrin-containing compound metabolism; chlorophyll biosynthesis.</text>
</comment>
<comment type="subunit">
    <text evidence="1">Homodimer.</text>
</comment>
<comment type="subcellular location">
    <subcellularLocation>
        <location evidence="3">Plastid</location>
        <location evidence="3">Chloroplast</location>
    </subcellularLocation>
</comment>
<comment type="tissue specificity">
    <text evidence="3">Expressed in leaf primordia and shoot apical meristems (SAM).</text>
</comment>
<comment type="disruption phenotype">
    <text evidence="3">Suppresses partially the ENF1 disruption pleiotropic developmental phenotypes, including the suppression of the abnormal patterning of the adaxial-abaxial-related gene expression in leaf primordia.</text>
</comment>
<comment type="similarity">
    <text evidence="7">Belongs to the class-III pyridoxal-phosphate-dependent aminotransferase family. HemL subfamily.</text>
</comment>
<feature type="transit peptide" description="Chloroplast" evidence="2">
    <location>
        <begin position="1"/>
        <end position="36"/>
    </location>
</feature>
<feature type="chain" id="PRO_0000001256" description="Glutamate-1-semialdehyde 2,1-aminomutase 2, chloroplastic">
    <location>
        <begin position="37"/>
        <end position="472"/>
    </location>
</feature>
<feature type="modified residue" description="N6-(pyridoxal phosphate)lysine" evidence="1">
    <location>
        <position position="312"/>
    </location>
</feature>
<feature type="mutagenesis site" description="In gsa2-1; suppression of enf1 mutant pleiotropic developmental phenotypes; when associated with S-162." evidence="3">
    <original>R</original>
    <variation>K</variation>
    <location>
        <position position="92"/>
    </location>
</feature>
<feature type="mutagenesis site" description="In gsa2-1; suppression of enf1 mutant pleiotropic developmental phenotypes; when associated with K-92." evidence="3">
    <original>G</original>
    <variation>S</variation>
    <location>
        <position position="162"/>
    </location>
</feature>
<feature type="sequence conflict" description="In Ref. 1; AAA79123." evidence="7" ref="1">
    <original>C</original>
    <variation>S</variation>
    <location>
        <position position="16"/>
    </location>
</feature>
<feature type="sequence conflict" description="In Ref. 1; AAA79123." evidence="7" ref="1">
    <original>N</original>
    <variation>K</variation>
    <location>
        <position position="194"/>
    </location>
</feature>
<feature type="sequence conflict" description="In Ref. 1; AAA79123." evidence="7" ref="1">
    <original>F</original>
    <variation>L</variation>
    <location>
        <position position="283"/>
    </location>
</feature>
<accession>Q42522</accession>
<accession>Q1JPM9</accession>
<accession>Q9SMM6</accession>
<name>GSA2_ARATH</name>
<reference key="1">
    <citation type="online journal article" date="1995" name="Plant Gene Register">
        <title>Nucleotide sequence of a gene encoding glutamate 1-semialdehyde aminotransferase from Arabidopsis thaliana 'Columbia'.</title>
        <authorList>
            <person name="Wenzlau J.M."/>
            <person name="Berry-Lowe S.L."/>
        </authorList>
        <locator>PGR95-007</locator>
    </citation>
    <scope>NUCLEOTIDE SEQUENCE [GENOMIC DNA]</scope>
    <source>
        <strain>cv. Columbia</strain>
    </source>
</reference>
<reference key="2">
    <citation type="journal article" date="2000" name="Nature">
        <title>Sequence and analysis of chromosome 3 of the plant Arabidopsis thaliana.</title>
        <authorList>
            <person name="Salanoubat M."/>
            <person name="Lemcke K."/>
            <person name="Rieger M."/>
            <person name="Ansorge W."/>
            <person name="Unseld M."/>
            <person name="Fartmann B."/>
            <person name="Valle G."/>
            <person name="Bloecker H."/>
            <person name="Perez-Alonso M."/>
            <person name="Obermaier B."/>
            <person name="Delseny M."/>
            <person name="Boutry M."/>
            <person name="Grivell L.A."/>
            <person name="Mache R."/>
            <person name="Puigdomenech P."/>
            <person name="De Simone V."/>
            <person name="Choisne N."/>
            <person name="Artiguenave F."/>
            <person name="Robert C."/>
            <person name="Brottier P."/>
            <person name="Wincker P."/>
            <person name="Cattolico L."/>
            <person name="Weissenbach J."/>
            <person name="Saurin W."/>
            <person name="Quetier F."/>
            <person name="Schaefer M."/>
            <person name="Mueller-Auer S."/>
            <person name="Gabel C."/>
            <person name="Fuchs M."/>
            <person name="Benes V."/>
            <person name="Wurmbach E."/>
            <person name="Drzonek H."/>
            <person name="Erfle H."/>
            <person name="Jordan N."/>
            <person name="Bangert S."/>
            <person name="Wiedelmann R."/>
            <person name="Kranz H."/>
            <person name="Voss H."/>
            <person name="Holland R."/>
            <person name="Brandt P."/>
            <person name="Nyakatura G."/>
            <person name="Vezzi A."/>
            <person name="D'Angelo M."/>
            <person name="Pallavicini A."/>
            <person name="Toppo S."/>
            <person name="Simionati B."/>
            <person name="Conrad A."/>
            <person name="Hornischer K."/>
            <person name="Kauer G."/>
            <person name="Loehnert T.-H."/>
            <person name="Nordsiek G."/>
            <person name="Reichelt J."/>
            <person name="Scharfe M."/>
            <person name="Schoen O."/>
            <person name="Bargues M."/>
            <person name="Terol J."/>
            <person name="Climent J."/>
            <person name="Navarro P."/>
            <person name="Collado C."/>
            <person name="Perez-Perez A."/>
            <person name="Ottenwaelder B."/>
            <person name="Duchemin D."/>
            <person name="Cooke R."/>
            <person name="Laudie M."/>
            <person name="Berger-Llauro C."/>
            <person name="Purnelle B."/>
            <person name="Masuy D."/>
            <person name="de Haan M."/>
            <person name="Maarse A.C."/>
            <person name="Alcaraz J.-P."/>
            <person name="Cottet A."/>
            <person name="Casacuberta E."/>
            <person name="Monfort A."/>
            <person name="Argiriou A."/>
            <person name="Flores M."/>
            <person name="Liguori R."/>
            <person name="Vitale D."/>
            <person name="Mannhaupt G."/>
            <person name="Haase D."/>
            <person name="Schoof H."/>
            <person name="Rudd S."/>
            <person name="Zaccaria P."/>
            <person name="Mewes H.-W."/>
            <person name="Mayer K.F.X."/>
            <person name="Kaul S."/>
            <person name="Town C.D."/>
            <person name="Koo H.L."/>
            <person name="Tallon L.J."/>
            <person name="Jenkins J."/>
            <person name="Rooney T."/>
            <person name="Rizzo M."/>
            <person name="Walts A."/>
            <person name="Utterback T."/>
            <person name="Fujii C.Y."/>
            <person name="Shea T.P."/>
            <person name="Creasy T.H."/>
            <person name="Haas B."/>
            <person name="Maiti R."/>
            <person name="Wu D."/>
            <person name="Peterson J."/>
            <person name="Van Aken S."/>
            <person name="Pai G."/>
            <person name="Militscher J."/>
            <person name="Sellers P."/>
            <person name="Gill J.E."/>
            <person name="Feldblyum T.V."/>
            <person name="Preuss D."/>
            <person name="Lin X."/>
            <person name="Nierman W.C."/>
            <person name="Salzberg S.L."/>
            <person name="White O."/>
            <person name="Venter J.C."/>
            <person name="Fraser C.M."/>
            <person name="Kaneko T."/>
            <person name="Nakamura Y."/>
            <person name="Sato S."/>
            <person name="Kato T."/>
            <person name="Asamizu E."/>
            <person name="Sasamoto S."/>
            <person name="Kimura T."/>
            <person name="Idesawa K."/>
            <person name="Kawashima K."/>
            <person name="Kishida Y."/>
            <person name="Kiyokawa C."/>
            <person name="Kohara M."/>
            <person name="Matsumoto M."/>
            <person name="Matsuno A."/>
            <person name="Muraki A."/>
            <person name="Nakayama S."/>
            <person name="Nakazaki N."/>
            <person name="Shinpo S."/>
            <person name="Takeuchi C."/>
            <person name="Wada T."/>
            <person name="Watanabe A."/>
            <person name="Yamada M."/>
            <person name="Yasuda M."/>
            <person name="Tabata S."/>
        </authorList>
    </citation>
    <scope>NUCLEOTIDE SEQUENCE [LARGE SCALE GENOMIC DNA]</scope>
    <source>
        <strain>cv. Columbia</strain>
    </source>
</reference>
<reference key="3">
    <citation type="journal article" date="2017" name="Plant J.">
        <title>Araport11: a complete reannotation of the Arabidopsis thaliana reference genome.</title>
        <authorList>
            <person name="Cheng C.Y."/>
            <person name="Krishnakumar V."/>
            <person name="Chan A.P."/>
            <person name="Thibaud-Nissen F."/>
            <person name="Schobel S."/>
            <person name="Town C.D."/>
        </authorList>
    </citation>
    <scope>GENOME REANNOTATION</scope>
    <source>
        <strain>cv. Columbia</strain>
    </source>
</reference>
<reference key="4">
    <citation type="submission" date="2006-05" db="EMBL/GenBank/DDBJ databases">
        <title>Arabidopsis ORF clones.</title>
        <authorList>
            <person name="Shinn P."/>
            <person name="Chen H."/>
            <person name="Kim C.J."/>
            <person name="Quinitio C."/>
            <person name="Ecker J.R."/>
        </authorList>
    </citation>
    <scope>NUCLEOTIDE SEQUENCE [LARGE SCALE MRNA]</scope>
    <source>
        <strain>cv. Columbia</strain>
    </source>
</reference>
<reference key="5">
    <citation type="submission" date="2006-07" db="EMBL/GenBank/DDBJ databases">
        <title>Large-scale analysis of RIKEN Arabidopsis full-length (RAFL) cDNAs.</title>
        <authorList>
            <person name="Totoki Y."/>
            <person name="Seki M."/>
            <person name="Ishida J."/>
            <person name="Nakajima M."/>
            <person name="Enju A."/>
            <person name="Kamiya A."/>
            <person name="Narusaka M."/>
            <person name="Shin-i T."/>
            <person name="Nakagawa M."/>
            <person name="Sakamoto N."/>
            <person name="Oishi K."/>
            <person name="Kohara Y."/>
            <person name="Kobayashi M."/>
            <person name="Toyoda A."/>
            <person name="Sakaki Y."/>
            <person name="Sakurai T."/>
            <person name="Iida K."/>
            <person name="Akiyama K."/>
            <person name="Satou M."/>
            <person name="Toyoda T."/>
            <person name="Konagaya A."/>
            <person name="Carninci P."/>
            <person name="Kawai J."/>
            <person name="Hayashizaki Y."/>
            <person name="Shinozaki K."/>
        </authorList>
    </citation>
    <scope>NUCLEOTIDE SEQUENCE [LARGE SCALE MRNA]</scope>
    <source>
        <strain>cv. Columbia</strain>
    </source>
</reference>
<reference key="6">
    <citation type="journal article" date="2005" name="Trends Plant Sci.">
        <title>Green genes gleaned.</title>
        <authorList>
            <person name="Beale S.I."/>
        </authorList>
    </citation>
    <scope>REVIEW</scope>
</reference>
<reference key="7">
    <citation type="journal article" date="2015" name="Plant Cell Physiol.">
        <title>Mutations in plastidial 5-aminolevulinic acid biosynthesis genes suppress a pleiotropic defect in shoot development of a mitochondrial GABA shunt mutant in Arabidopsis.</title>
        <authorList>
            <person name="Toyokura K."/>
            <person name="Yamaguchi K."/>
            <person name="Shigenobu S."/>
            <person name="Fukaki H."/>
            <person name="Tatematsu K."/>
            <person name="Okada K."/>
        </authorList>
    </citation>
    <scope>DISRUPTION PHENOTYPE</scope>
    <scope>MUTAGENESIS OF ARG-92 AND GLY-162</scope>
    <scope>TISSUE SPECIFICITY</scope>
    <scope>SUBCELLULAR LOCATION</scope>
    <source>
        <strain>cv. Columbia</strain>
    </source>
</reference>
<keyword id="KW-0149">Chlorophyll biosynthesis</keyword>
<keyword id="KW-0150">Chloroplast</keyword>
<keyword id="KW-0413">Isomerase</keyword>
<keyword id="KW-0934">Plastid</keyword>
<keyword id="KW-0627">Porphyrin biosynthesis</keyword>
<keyword id="KW-0663">Pyridoxal phosphate</keyword>
<keyword id="KW-1185">Reference proteome</keyword>
<keyword id="KW-0809">Transit peptide</keyword>
<organism>
    <name type="scientific">Arabidopsis thaliana</name>
    <name type="common">Mouse-ear cress</name>
    <dbReference type="NCBI Taxonomy" id="3702"/>
    <lineage>
        <taxon>Eukaryota</taxon>
        <taxon>Viridiplantae</taxon>
        <taxon>Streptophyta</taxon>
        <taxon>Embryophyta</taxon>
        <taxon>Tracheophyta</taxon>
        <taxon>Spermatophyta</taxon>
        <taxon>Magnoliopsida</taxon>
        <taxon>eudicotyledons</taxon>
        <taxon>Gunneridae</taxon>
        <taxon>Pentapetalae</taxon>
        <taxon>rosids</taxon>
        <taxon>malvids</taxon>
        <taxon>Brassicales</taxon>
        <taxon>Brassicaceae</taxon>
        <taxon>Camelineae</taxon>
        <taxon>Arabidopsis</taxon>
    </lineage>
</organism>
<sequence length="472" mass="50142">MAATLTGSGIALGFSCSAKFSKRASSSSNRRCIKMSVSVEEKTKKFTLQKSEEAFNAAKNLMPGGVNSPVRAFKSVGGQPVVMDSAKGSRIRDIDGNEYIDYVGSWGPAIIGHADDEVLAALAETMKKGTSFGAPCLLENVLAEMVISAVPSIEMVRFVNSGTEACMGVLRLARAFTGKQKFIKFEGCYHGHANSFLVKAGSGVATLGLPDSPGVPKAATSDTLTAPYNDIAAVEKLFEANKGEIAAIILEPVVGNSGFITPKPEFIEGIRRITKDNGALLIFDEVMTGFRLAYGGAQEYFGITPDLTTLGKIIGGGLPVGAYGGRRDIMEMVAPAGPMYQAGTLSGNPLAMTAGIHTLKRLSQPGTYEYLDKITKELTNGILEAGKKTGHAMCGGYISGMFGFFFTEGPVYDFSDAKKSDTEKFGKFFRGMLEEGVYLAPSQFEAGFTSLAHTSEDIQFTIAAAEKVLSRL</sequence>
<protein>
    <recommendedName>
        <fullName evidence="6">Glutamate-1-semialdehyde 2,1-aminomutase 2, chloroplastic</fullName>
        <shortName evidence="6">GSA 2</shortName>
        <ecNumber evidence="1">5.4.3.8</ecNumber>
    </recommendedName>
    <alternativeName>
        <fullName evidence="6">Glutamate-1-semialdehyde aminotransferase 2</fullName>
        <shortName evidence="6">GSA-AT 2</shortName>
    </alternativeName>
</protein>
<evidence type="ECO:0000250" key="1">
    <source>
        <dbReference type="UniProtKB" id="P42799"/>
    </source>
</evidence>
<evidence type="ECO:0000255" key="2"/>
<evidence type="ECO:0000269" key="3">
    <source>
    </source>
</evidence>
<evidence type="ECO:0000303" key="4">
    <source>
    </source>
</evidence>
<evidence type="ECO:0000303" key="5">
    <source>
    </source>
</evidence>
<evidence type="ECO:0000303" key="6">
    <source ref="1"/>
</evidence>
<evidence type="ECO:0000305" key="7"/>
<evidence type="ECO:0000312" key="8">
    <source>
        <dbReference type="Araport" id="AT3G48730"/>
    </source>
</evidence>
<evidence type="ECO:0000312" key="9">
    <source>
        <dbReference type="EMBL" id="CAB62362.1"/>
    </source>
</evidence>
<gene>
    <name evidence="6" type="primary">GSA2</name>
    <name evidence="5" type="synonym">FNE1</name>
    <name evidence="4" type="synonym">HEML2</name>
    <name evidence="8" type="ordered locus">At3g48730</name>
    <name evidence="9" type="ORF">T8P19.240</name>
</gene>